<name>GLUQ_ECOL6</name>
<proteinExistence type="inferred from homology"/>
<accession>Q8FL25</accession>
<reference key="1">
    <citation type="journal article" date="2002" name="Proc. Natl. Acad. Sci. U.S.A.">
        <title>Extensive mosaic structure revealed by the complete genome sequence of uropathogenic Escherichia coli.</title>
        <authorList>
            <person name="Welch R.A."/>
            <person name="Burland V."/>
            <person name="Plunkett G. III"/>
            <person name="Redford P."/>
            <person name="Roesch P."/>
            <person name="Rasko D."/>
            <person name="Buckles E.L."/>
            <person name="Liou S.-R."/>
            <person name="Boutin A."/>
            <person name="Hackett J."/>
            <person name="Stroud D."/>
            <person name="Mayhew G.F."/>
            <person name="Rose D.J."/>
            <person name="Zhou S."/>
            <person name="Schwartz D.C."/>
            <person name="Perna N.T."/>
            <person name="Mobley H.L.T."/>
            <person name="Donnenberg M.S."/>
            <person name="Blattner F.R."/>
        </authorList>
    </citation>
    <scope>NUCLEOTIDE SEQUENCE [LARGE SCALE GENOMIC DNA]</scope>
    <source>
        <strain>CFT073 / ATCC 700928 / UPEC</strain>
    </source>
</reference>
<keyword id="KW-0030">Aminoacyl-tRNA synthetase</keyword>
<keyword id="KW-0067">ATP-binding</keyword>
<keyword id="KW-0436">Ligase</keyword>
<keyword id="KW-0479">Metal-binding</keyword>
<keyword id="KW-0547">Nucleotide-binding</keyword>
<keyword id="KW-1185">Reference proteome</keyword>
<keyword id="KW-0862">Zinc</keyword>
<evidence type="ECO:0000255" key="1">
    <source>
        <dbReference type="HAMAP-Rule" id="MF_01428"/>
    </source>
</evidence>
<protein>
    <recommendedName>
        <fullName evidence="1">Glutamyl-Q tRNA(Asp) synthetase</fullName>
        <shortName evidence="1">Glu-Q-RSs</shortName>
        <ecNumber evidence="1">6.1.1.-</ecNumber>
    </recommendedName>
</protein>
<sequence>MLPPYFLFKEMTDTHYIGRFAPSPSGELHFGSLIAALGSYLQARARQGRWLVRIEDIDPPREVPGAAETILRQLEHYGLYWDGDVLWQSQRHHAYREALAWLHEQGLSYYCTCTRARIQSIGGIYDGHCRDLHHGPDNAAVRIRQQHPVTQFTDLLRGIIHADEKLAREDFIIHRRDGLFAYNLAVVVDDHFQGVSEIVRGADLIEPTVRQISLYQLFGWKVPDYIHLPLALNPQGAKLSKQNHAPALPKGDPRPVLIAALHFLGQQVETHWQDFSVEQILQSAVKNWTLTAVPESAIVNSTFSNASC</sequence>
<feature type="chain" id="PRO_0000208302" description="Glutamyl-Q tRNA(Asp) synthetase">
    <location>
        <begin position="1"/>
        <end position="308"/>
    </location>
</feature>
<feature type="short sequence motif" description="'HIGH' region">
    <location>
        <begin position="22"/>
        <end position="32"/>
    </location>
</feature>
<feature type="short sequence motif" description="'KMSKS' region">
    <location>
        <begin position="238"/>
        <end position="242"/>
    </location>
</feature>
<feature type="binding site" evidence="1">
    <location>
        <begin position="19"/>
        <end position="23"/>
    </location>
    <ligand>
        <name>L-glutamate</name>
        <dbReference type="ChEBI" id="CHEBI:29985"/>
    </ligand>
</feature>
<feature type="binding site" evidence="1">
    <location>
        <position position="55"/>
    </location>
    <ligand>
        <name>L-glutamate</name>
        <dbReference type="ChEBI" id="CHEBI:29985"/>
    </ligand>
</feature>
<feature type="binding site" evidence="1">
    <location>
        <position position="111"/>
    </location>
    <ligand>
        <name>Zn(2+)</name>
        <dbReference type="ChEBI" id="CHEBI:29105"/>
    </ligand>
</feature>
<feature type="binding site" evidence="1">
    <location>
        <position position="113"/>
    </location>
    <ligand>
        <name>Zn(2+)</name>
        <dbReference type="ChEBI" id="CHEBI:29105"/>
    </ligand>
</feature>
<feature type="binding site" evidence="1">
    <location>
        <position position="125"/>
    </location>
    <ligand>
        <name>Zn(2+)</name>
        <dbReference type="ChEBI" id="CHEBI:29105"/>
    </ligand>
</feature>
<feature type="binding site" evidence="1">
    <location>
        <position position="129"/>
    </location>
    <ligand>
        <name>Zn(2+)</name>
        <dbReference type="ChEBI" id="CHEBI:29105"/>
    </ligand>
</feature>
<feature type="binding site" evidence="1">
    <location>
        <position position="182"/>
    </location>
    <ligand>
        <name>L-glutamate</name>
        <dbReference type="ChEBI" id="CHEBI:29985"/>
    </ligand>
</feature>
<feature type="binding site" evidence="1">
    <location>
        <position position="200"/>
    </location>
    <ligand>
        <name>L-glutamate</name>
        <dbReference type="ChEBI" id="CHEBI:29985"/>
    </ligand>
</feature>
<feature type="binding site" evidence="1">
    <location>
        <position position="241"/>
    </location>
    <ligand>
        <name>ATP</name>
        <dbReference type="ChEBI" id="CHEBI:30616"/>
    </ligand>
</feature>
<organism>
    <name type="scientific">Escherichia coli O6:H1 (strain CFT073 / ATCC 700928 / UPEC)</name>
    <dbReference type="NCBI Taxonomy" id="199310"/>
    <lineage>
        <taxon>Bacteria</taxon>
        <taxon>Pseudomonadati</taxon>
        <taxon>Pseudomonadota</taxon>
        <taxon>Gammaproteobacteria</taxon>
        <taxon>Enterobacterales</taxon>
        <taxon>Enterobacteriaceae</taxon>
        <taxon>Escherichia</taxon>
    </lineage>
</organism>
<comment type="function">
    <text evidence="1">Catalyzes the tRNA-independent activation of glutamate in presence of ATP and the subsequent transfer of glutamate onto a tRNA(Asp). Glutamate is transferred on the 2-amino-5-(4,5-dihydroxy-2-cyclopenten-1-yl) moiety of the queuosine in the wobble position of the QUC anticodon.</text>
</comment>
<comment type="cofactor">
    <cofactor evidence="1">
        <name>Zn(2+)</name>
        <dbReference type="ChEBI" id="CHEBI:29105"/>
    </cofactor>
    <text evidence="1">Binds 1 zinc ion per subunit.</text>
</comment>
<comment type="similarity">
    <text evidence="1">Belongs to the class-I aminoacyl-tRNA synthetase family. GluQ subfamily.</text>
</comment>
<dbReference type="EC" id="6.1.1.-" evidence="1"/>
<dbReference type="EMBL" id="AE014075">
    <property type="protein sequence ID" value="AAN78671.1"/>
    <property type="molecule type" value="Genomic_DNA"/>
</dbReference>
<dbReference type="SMR" id="Q8FL25"/>
<dbReference type="STRING" id="199310.c0177"/>
<dbReference type="KEGG" id="ecc:c0177"/>
<dbReference type="eggNOG" id="COG0008">
    <property type="taxonomic scope" value="Bacteria"/>
</dbReference>
<dbReference type="HOGENOM" id="CLU_015768_0_1_6"/>
<dbReference type="BioCyc" id="ECOL199310:C0177-MONOMER"/>
<dbReference type="Proteomes" id="UP000001410">
    <property type="component" value="Chromosome"/>
</dbReference>
<dbReference type="GO" id="GO:0005829">
    <property type="term" value="C:cytosol"/>
    <property type="evidence" value="ECO:0007669"/>
    <property type="project" value="TreeGrafter"/>
</dbReference>
<dbReference type="GO" id="GO:0005524">
    <property type="term" value="F:ATP binding"/>
    <property type="evidence" value="ECO:0007669"/>
    <property type="project" value="UniProtKB-KW"/>
</dbReference>
<dbReference type="GO" id="GO:0004818">
    <property type="term" value="F:glutamate-tRNA ligase activity"/>
    <property type="evidence" value="ECO:0007669"/>
    <property type="project" value="TreeGrafter"/>
</dbReference>
<dbReference type="GO" id="GO:0008270">
    <property type="term" value="F:zinc ion binding"/>
    <property type="evidence" value="ECO:0007669"/>
    <property type="project" value="UniProtKB-UniRule"/>
</dbReference>
<dbReference type="GO" id="GO:0006424">
    <property type="term" value="P:glutamyl-tRNA aminoacylation"/>
    <property type="evidence" value="ECO:0007669"/>
    <property type="project" value="InterPro"/>
</dbReference>
<dbReference type="GO" id="GO:0006400">
    <property type="term" value="P:tRNA modification"/>
    <property type="evidence" value="ECO:0007669"/>
    <property type="project" value="InterPro"/>
</dbReference>
<dbReference type="FunFam" id="3.40.50.620:FF:000093">
    <property type="entry name" value="Glutamyl-Q tRNA(Asp) synthetase"/>
    <property type="match status" value="1"/>
</dbReference>
<dbReference type="Gene3D" id="3.40.50.620">
    <property type="entry name" value="HUPs"/>
    <property type="match status" value="1"/>
</dbReference>
<dbReference type="HAMAP" id="MF_01428">
    <property type="entry name" value="Glu_Q_tRNA_synth"/>
    <property type="match status" value="1"/>
</dbReference>
<dbReference type="InterPro" id="IPR022380">
    <property type="entry name" value="Glu-Q_tRNA(Asp)_Synthase"/>
</dbReference>
<dbReference type="InterPro" id="IPR000924">
    <property type="entry name" value="Glu/Gln-tRNA-synth"/>
</dbReference>
<dbReference type="InterPro" id="IPR020058">
    <property type="entry name" value="Glu/Gln-tRNA-synth_Ib_cat-dom"/>
</dbReference>
<dbReference type="InterPro" id="IPR049940">
    <property type="entry name" value="GluQ/Sye"/>
</dbReference>
<dbReference type="InterPro" id="IPR014729">
    <property type="entry name" value="Rossmann-like_a/b/a_fold"/>
</dbReference>
<dbReference type="NCBIfam" id="NF004312">
    <property type="entry name" value="PRK05710.1-1"/>
    <property type="match status" value="1"/>
</dbReference>
<dbReference type="NCBIfam" id="NF004314">
    <property type="entry name" value="PRK05710.1-3"/>
    <property type="match status" value="1"/>
</dbReference>
<dbReference type="NCBIfam" id="TIGR03838">
    <property type="entry name" value="queuosine_YadB"/>
    <property type="match status" value="1"/>
</dbReference>
<dbReference type="PANTHER" id="PTHR43311">
    <property type="entry name" value="GLUTAMATE--TRNA LIGASE"/>
    <property type="match status" value="1"/>
</dbReference>
<dbReference type="PANTHER" id="PTHR43311:SF1">
    <property type="entry name" value="GLUTAMYL-Q TRNA(ASP) SYNTHETASE"/>
    <property type="match status" value="1"/>
</dbReference>
<dbReference type="Pfam" id="PF00749">
    <property type="entry name" value="tRNA-synt_1c"/>
    <property type="match status" value="1"/>
</dbReference>
<dbReference type="PRINTS" id="PR00987">
    <property type="entry name" value="TRNASYNTHGLU"/>
</dbReference>
<dbReference type="SUPFAM" id="SSF52374">
    <property type="entry name" value="Nucleotidylyl transferase"/>
    <property type="match status" value="1"/>
</dbReference>
<gene>
    <name evidence="1" type="primary">gluQ</name>
    <name type="ordered locus">c0177</name>
</gene>